<name>ABAA_ASPFU</name>
<keyword id="KW-0010">Activator</keyword>
<keyword id="KW-0183">Conidiation</keyword>
<keyword id="KW-0539">Nucleus</keyword>
<keyword id="KW-1185">Reference proteome</keyword>
<keyword id="KW-0749">Sporulation</keyword>
<keyword id="KW-0804">Transcription</keyword>
<keyword id="KW-0805">Transcription regulation</keyword>
<gene>
    <name evidence="10" type="primary">abaA</name>
    <name type="ORF">AFUA_1G04830</name>
</gene>
<feature type="chain" id="PRO_0000435933" description="Conidiophore development regulator abaA">
    <location>
        <begin position="1"/>
        <end position="797"/>
    </location>
</feature>
<feature type="DNA-binding region" description="TEA" evidence="3">
    <location>
        <begin position="130"/>
        <end position="204"/>
    </location>
</feature>
<feature type="region of interest" description="Disordered" evidence="4">
    <location>
        <begin position="696"/>
        <end position="797"/>
    </location>
</feature>
<feature type="compositionally biased region" description="Polar residues" evidence="4">
    <location>
        <begin position="716"/>
        <end position="726"/>
    </location>
</feature>
<accession>E9RD40</accession>
<sequence>MATDWQPECIAPQHQSGLENIGHHTDRALQNTSGNVQSYSDAILHGGMSGRDDHLQHLAYKYSHAPVHPQPMQTATTLHPHHILNARVQAKKLRRVQSLGPNHAGARRGRSYLKSQKYLEYRARPRRDTGKDGEPVWSDELEDAFQQALEANPPMGRRKWSERGKSYGRNELIAEYIYKVTGKKRTRKQVSSHLQVLDSFLKGDPDWERLVREQPADRSGNQHQPVGPKWRTSLDHPLPSHYGGHMHATYHDHLSPVQPYVGELPPPHYTLGSNMHERSTDTIHGFNFDMWVSAPQQANQGDKAFHVYTCLQGDQYHPVAPPMPLENVRDWRTTFPHLNSVMEELDGPLDCEIILLEASLKLMNDFPPPGSKLGIQLDIDFAPPGMTDATVLSQMDNWTCSTYIYEDGNRLSKADHNLARPLSTKVKPPFESSWWAKLFTELTQDKQMAEKSGRHQNADDHIRQFFRSLSAVQEIRAISQNSRRVSQGSGHPGDCSKRMAILLWKFRQTLPDEVGLTTWRKLIPPPDRTMMNSPKPATGIDLPPLSLDSILLKPQPPNVYQNPQGHDLLHQNGTSQPHWPLYPPPHESMSNMYHSTGSFDFLNSVSKAEDGLPDRTAVTSILDSFPAMPPQETSQPSSLNVSSGGPVMLNVHDMSLSHHNLAGYALSHDNHYVPSQQHGVSVHDSSNVLNNIFGPGSQPMDEIGNSQSAWGPPIPSTTIPSDVGSNHYTHLPYHHHDHQTSASRESHPPNGFEGLMGPDDLMDKIVGSMPDDPGMNGAGPDHASAAYADTNATEAVQ</sequence>
<reference key="1">
    <citation type="journal article" date="2005" name="Nature">
        <title>Genomic sequence of the pathogenic and allergenic filamentous fungus Aspergillus fumigatus.</title>
        <authorList>
            <person name="Nierman W.C."/>
            <person name="Pain A."/>
            <person name="Anderson M.J."/>
            <person name="Wortman J.R."/>
            <person name="Kim H.S."/>
            <person name="Arroyo J."/>
            <person name="Berriman M."/>
            <person name="Abe K."/>
            <person name="Archer D.B."/>
            <person name="Bermejo C."/>
            <person name="Bennett J.W."/>
            <person name="Bowyer P."/>
            <person name="Chen D."/>
            <person name="Collins M."/>
            <person name="Coulsen R."/>
            <person name="Davies R."/>
            <person name="Dyer P.S."/>
            <person name="Farman M.L."/>
            <person name="Fedorova N."/>
            <person name="Fedorova N.D."/>
            <person name="Feldblyum T.V."/>
            <person name="Fischer R."/>
            <person name="Fosker N."/>
            <person name="Fraser A."/>
            <person name="Garcia J.L."/>
            <person name="Garcia M.J."/>
            <person name="Goble A."/>
            <person name="Goldman G.H."/>
            <person name="Gomi K."/>
            <person name="Griffith-Jones S."/>
            <person name="Gwilliam R."/>
            <person name="Haas B.J."/>
            <person name="Haas H."/>
            <person name="Harris D.E."/>
            <person name="Horiuchi H."/>
            <person name="Huang J."/>
            <person name="Humphray S."/>
            <person name="Jimenez J."/>
            <person name="Keller N."/>
            <person name="Khouri H."/>
            <person name="Kitamoto K."/>
            <person name="Kobayashi T."/>
            <person name="Konzack S."/>
            <person name="Kulkarni R."/>
            <person name="Kumagai T."/>
            <person name="Lafton A."/>
            <person name="Latge J.-P."/>
            <person name="Li W."/>
            <person name="Lord A."/>
            <person name="Lu C."/>
            <person name="Majoros W.H."/>
            <person name="May G.S."/>
            <person name="Miller B.L."/>
            <person name="Mohamoud Y."/>
            <person name="Molina M."/>
            <person name="Monod M."/>
            <person name="Mouyna I."/>
            <person name="Mulligan S."/>
            <person name="Murphy L.D."/>
            <person name="O'Neil S."/>
            <person name="Paulsen I."/>
            <person name="Penalva M.A."/>
            <person name="Pertea M."/>
            <person name="Price C."/>
            <person name="Pritchard B.L."/>
            <person name="Quail M.A."/>
            <person name="Rabbinowitsch E."/>
            <person name="Rawlins N."/>
            <person name="Rajandream M.A."/>
            <person name="Reichard U."/>
            <person name="Renauld H."/>
            <person name="Robson G.D."/>
            <person name="Rodriguez de Cordoba S."/>
            <person name="Rodriguez-Pena J.M."/>
            <person name="Ronning C.M."/>
            <person name="Rutter S."/>
            <person name="Salzberg S.L."/>
            <person name="Sanchez M."/>
            <person name="Sanchez-Ferrero J.C."/>
            <person name="Saunders D."/>
            <person name="Seeger K."/>
            <person name="Squares R."/>
            <person name="Squares S."/>
            <person name="Takeuchi M."/>
            <person name="Tekaia F."/>
            <person name="Turner G."/>
            <person name="Vazquez de Aldana C.R."/>
            <person name="Weidman J."/>
            <person name="White O."/>
            <person name="Woodward J.R."/>
            <person name="Yu J.-H."/>
            <person name="Fraser C.M."/>
            <person name="Galagan J.E."/>
            <person name="Asai K."/>
            <person name="Machida M."/>
            <person name="Hall N."/>
            <person name="Barrell B.G."/>
            <person name="Denning D.W."/>
        </authorList>
    </citation>
    <scope>NUCLEOTIDE SEQUENCE [LARGE SCALE GENOMIC DNA]</scope>
    <source>
        <strain>ATCC MYA-4609 / CBS 101355 / FGSC A1100 / Af293</strain>
    </source>
</reference>
<reference key="2">
    <citation type="journal article" date="2011" name="Microbiology">
        <title>AbaA and WetA govern distinct stages of Aspergillus fumigatus development.</title>
        <authorList>
            <person name="Tao L."/>
            <person name="Yu J.H."/>
        </authorList>
    </citation>
    <scope>INDUCTION</scope>
    <scope>FUNCTION</scope>
    <scope>DISRUPTION PHENOTYPE</scope>
</reference>
<reference key="3">
    <citation type="journal article" date="2012" name="Eukaryot. Cell">
        <title>Heat shock protein 90 is required for conidiation and cell wall integrity in Aspergillus fumigatus.</title>
        <authorList>
            <person name="Lamoth F."/>
            <person name="Juvvadi P.R."/>
            <person name="Fortwendel J.R."/>
            <person name="Steinbach W.J."/>
        </authorList>
    </citation>
    <scope>INDUCTION</scope>
</reference>
<reference key="4">
    <citation type="journal article" date="2013" name="Eukaryot. Cell">
        <title>Laccases involved in 1,8-dihydroxynaphthalene melanin biosynthesis in Aspergillus fumigatus are regulated by developmental factors and copper homeostasis.</title>
        <authorList>
            <person name="Upadhyay S."/>
            <person name="Torres G."/>
            <person name="Lin X."/>
        </authorList>
    </citation>
    <scope>FUNCTION</scope>
</reference>
<reference key="5">
    <citation type="journal article" date="2015" name="Biochem. Biophys. Res. Commun.">
        <title>Proteomic analyses reveal the key roles of BrlA and AbaA in biogenesis of gliotoxin in Aspergillus fumigatus.</title>
        <authorList>
            <person name="Shin K.S."/>
            <person name="Kim Y.H."/>
            <person name="Yu J.H."/>
        </authorList>
    </citation>
    <scope>FUNCTION</scope>
    <scope>DISRUPTION PHENOTYPE</scope>
</reference>
<reference key="6">
    <citation type="journal article" date="2015" name="Mycobiology">
        <title>In vitro antifungal activity and mode of action of 2',4'-dihydroxychalcone against Aspergillus fumigatus.</title>
        <authorList>
            <person name="Seo Y.H."/>
            <person name="Kim S.S."/>
            <person name="Shin K.S."/>
        </authorList>
    </citation>
    <scope>INDUCTION</scope>
</reference>
<organism>
    <name type="scientific">Aspergillus fumigatus (strain ATCC MYA-4609 / CBS 101355 / FGSC A1100 / Af293)</name>
    <name type="common">Neosartorya fumigata</name>
    <dbReference type="NCBI Taxonomy" id="330879"/>
    <lineage>
        <taxon>Eukaryota</taxon>
        <taxon>Fungi</taxon>
        <taxon>Dikarya</taxon>
        <taxon>Ascomycota</taxon>
        <taxon>Pezizomycotina</taxon>
        <taxon>Eurotiomycetes</taxon>
        <taxon>Eurotiomycetidae</taxon>
        <taxon>Eurotiales</taxon>
        <taxon>Aspergillaceae</taxon>
        <taxon>Aspergillus</taxon>
        <taxon>Aspergillus subgen. Fumigati</taxon>
    </lineage>
</organism>
<protein>
    <recommendedName>
        <fullName evidence="11">Conidiophore development regulator abaA</fullName>
    </recommendedName>
</protein>
<evidence type="ECO:0000250" key="1">
    <source>
        <dbReference type="UniProtKB" id="I1S4T3"/>
    </source>
</evidence>
<evidence type="ECO:0000250" key="2">
    <source>
        <dbReference type="UniProtKB" id="P20945"/>
    </source>
</evidence>
<evidence type="ECO:0000255" key="3">
    <source>
        <dbReference type="PROSITE-ProRule" id="PRU00505"/>
    </source>
</evidence>
<evidence type="ECO:0000256" key="4">
    <source>
        <dbReference type="SAM" id="MobiDB-lite"/>
    </source>
</evidence>
<evidence type="ECO:0000269" key="5">
    <source>
    </source>
</evidence>
<evidence type="ECO:0000269" key="6">
    <source>
    </source>
</evidence>
<evidence type="ECO:0000269" key="7">
    <source>
    </source>
</evidence>
<evidence type="ECO:0000269" key="8">
    <source>
    </source>
</evidence>
<evidence type="ECO:0000269" key="9">
    <source>
    </source>
</evidence>
<evidence type="ECO:0000303" key="10">
    <source>
    </source>
</evidence>
<evidence type="ECO:0000305" key="11"/>
<proteinExistence type="evidence at transcript level"/>
<dbReference type="EMBL" id="AAHF01000007">
    <property type="protein sequence ID" value="EAL88194.1"/>
    <property type="molecule type" value="Genomic_DNA"/>
</dbReference>
<dbReference type="RefSeq" id="XP_750232.1">
    <property type="nucleotide sequence ID" value="XM_745139.1"/>
</dbReference>
<dbReference type="SMR" id="E9RD40"/>
<dbReference type="STRING" id="330879.E9RD40"/>
<dbReference type="EnsemblFungi" id="EAL88194">
    <property type="protein sequence ID" value="EAL88194"/>
    <property type="gene ID" value="AFUA_1G04830"/>
</dbReference>
<dbReference type="GeneID" id="3507334"/>
<dbReference type="KEGG" id="afm:AFUA_1G04830"/>
<dbReference type="VEuPathDB" id="FungiDB:Afu1g04830"/>
<dbReference type="eggNOG" id="KOG3841">
    <property type="taxonomic scope" value="Eukaryota"/>
</dbReference>
<dbReference type="HOGENOM" id="CLU_356362_0_0_1"/>
<dbReference type="InParanoid" id="E9RD40"/>
<dbReference type="OMA" id="MWVSAPQ"/>
<dbReference type="OrthoDB" id="10006572at2759"/>
<dbReference type="Proteomes" id="UP000002530">
    <property type="component" value="Chromosome 1"/>
</dbReference>
<dbReference type="GO" id="GO:0005634">
    <property type="term" value="C:nucleus"/>
    <property type="evidence" value="ECO:0007669"/>
    <property type="project" value="UniProtKB-SubCell"/>
</dbReference>
<dbReference type="GO" id="GO:0005667">
    <property type="term" value="C:transcription regulator complex"/>
    <property type="evidence" value="ECO:0000318"/>
    <property type="project" value="GO_Central"/>
</dbReference>
<dbReference type="GO" id="GO:0000981">
    <property type="term" value="F:DNA-binding transcription factor activity, RNA polymerase II-specific"/>
    <property type="evidence" value="ECO:0000318"/>
    <property type="project" value="GO_Central"/>
</dbReference>
<dbReference type="GO" id="GO:0000978">
    <property type="term" value="F:RNA polymerase II cis-regulatory region sequence-specific DNA binding"/>
    <property type="evidence" value="ECO:0000318"/>
    <property type="project" value="GO_Central"/>
</dbReference>
<dbReference type="GO" id="GO:0043936">
    <property type="term" value="P:asexual sporulation resulting in formation of a cellular spore"/>
    <property type="evidence" value="ECO:0000315"/>
    <property type="project" value="AspGD"/>
</dbReference>
<dbReference type="GO" id="GO:0001896">
    <property type="term" value="P:autolysis"/>
    <property type="evidence" value="ECO:0000314"/>
    <property type="project" value="CACAO"/>
</dbReference>
<dbReference type="GO" id="GO:0070787">
    <property type="term" value="P:conidiophore development"/>
    <property type="evidence" value="ECO:0000315"/>
    <property type="project" value="CACAO"/>
</dbReference>
<dbReference type="GO" id="GO:0048315">
    <property type="term" value="P:conidium formation"/>
    <property type="evidence" value="ECO:0007669"/>
    <property type="project" value="UniProtKB-KW"/>
</dbReference>
<dbReference type="GO" id="GO:0043945">
    <property type="term" value="P:positive regulation of asexual sporulation resulting in formation of a cellular spore"/>
    <property type="evidence" value="ECO:0000315"/>
    <property type="project" value="AspGD"/>
</dbReference>
<dbReference type="GO" id="GO:0006357">
    <property type="term" value="P:regulation of transcription by RNA polymerase II"/>
    <property type="evidence" value="ECO:0000318"/>
    <property type="project" value="GO_Central"/>
</dbReference>
<dbReference type="Gene3D" id="6.10.20.40">
    <property type="entry name" value="TEA/ATTS domain"/>
    <property type="match status" value="1"/>
</dbReference>
<dbReference type="InterPro" id="IPR000818">
    <property type="entry name" value="TEA/ATTS_dom"/>
</dbReference>
<dbReference type="InterPro" id="IPR038096">
    <property type="entry name" value="TEA/ATTS_sf"/>
</dbReference>
<dbReference type="InterPro" id="IPR050937">
    <property type="entry name" value="TEC1_TEAD_TF"/>
</dbReference>
<dbReference type="PANTHER" id="PTHR11834:SF0">
    <property type="entry name" value="PROTEIN SCALLOPED"/>
    <property type="match status" value="1"/>
</dbReference>
<dbReference type="PANTHER" id="PTHR11834">
    <property type="entry name" value="TRANSCRIPTIONAL ENHANCER FACTOR TEF RELATED"/>
    <property type="match status" value="1"/>
</dbReference>
<dbReference type="Pfam" id="PF01285">
    <property type="entry name" value="TEA"/>
    <property type="match status" value="1"/>
</dbReference>
<dbReference type="PRINTS" id="PR00065">
    <property type="entry name" value="TEADOMAIN"/>
</dbReference>
<dbReference type="SMART" id="SM00426">
    <property type="entry name" value="TEA"/>
    <property type="match status" value="1"/>
</dbReference>
<dbReference type="PROSITE" id="PS00554">
    <property type="entry name" value="TEA_1"/>
    <property type="match status" value="1"/>
</dbReference>
<dbReference type="PROSITE" id="PS51088">
    <property type="entry name" value="TEA_2"/>
    <property type="match status" value="1"/>
</dbReference>
<comment type="function">
    <text evidence="2 5 7 8">BrlA, abaA and wetA are pivotal regulators of conidiophore development and conidium maturation (By similarity). They act individually and together to regulate their own expression and that of numerous other sporulation-specific genes (By similarity). Binds to the sequence 5'-CATTCY-3', where Y is a pyrimidine, making both major- and minor-groove contacts (By similarity). Essential for differentiation and functionality of phialides as conidiogenous cells (PubMed:20966095). Regulates autolysis and cell death (PubMed:20966095). Positively regulates expression of the gliotoxin biosynthetic gene cluster in actively growing vegetative cells, and likely bridges morphological and chemical development during the life-cycle (PubMed:26032501). Negatively regulates expression of the melanin biosynthetic gene cluster (PubMed:24123270).</text>
</comment>
<comment type="subcellular location">
    <subcellularLocation>
        <location evidence="1">Nucleus</location>
    </subcellularLocation>
    <text evidence="1">localizes to the nuclei of phialides and terminal cells of mature conidia (By similarity).</text>
</comment>
<comment type="induction">
    <text evidence="5 6 9">Highly expressed during conidiation (PubMed:20966095). Expression is positively regulated by hsp90 (PubMed:22822234). Expression is decreased by 2',4'-Dihydroxychalcone (2',4'-DHC) (PubMed:26190922).</text>
</comment>
<comment type="disruption phenotype">
    <text evidence="5 8">Results in the formation of aberrant conidiophores exhibiting reiterated cylinder-like terminal cells lacking spores and causes delayed autolysis and cell death (PubMed:20966095). Reduces significantly expression of the gliotoxin biosynthetic gene cluster including gliM, gliP, gliT, and gliZ (PubMed:26032501).</text>
</comment>
<comment type="similarity">
    <text evidence="11">Belongs to the TEC1 family.</text>
</comment>